<evidence type="ECO:0000255" key="1">
    <source>
        <dbReference type="HAMAP-Rule" id="MF_01547"/>
    </source>
</evidence>
<name>RLME_NEIM0</name>
<sequence>MAVRSKSSKAWLHEHVNDHYVHMAQKDGYRARAAYKLLEINEKDKLIKPGTVLADLGSAPGSWSQVAAKLTGTSGAVFALDILPMEAIGGVSFIQGDFRENDVLAQFETLLDNRPLDLVICDMAPNMSGNAVSDQARSFYLCELALDFASQHLKTGGSFLVKVFQGAGYQEYMAAMREIFGTVQTRKPEASRNRSSEIYLLGKNKR</sequence>
<organism>
    <name type="scientific">Neisseria meningitidis serogroup C (strain 053442)</name>
    <dbReference type="NCBI Taxonomy" id="374833"/>
    <lineage>
        <taxon>Bacteria</taxon>
        <taxon>Pseudomonadati</taxon>
        <taxon>Pseudomonadota</taxon>
        <taxon>Betaproteobacteria</taxon>
        <taxon>Neisseriales</taxon>
        <taxon>Neisseriaceae</taxon>
        <taxon>Neisseria</taxon>
    </lineage>
</organism>
<protein>
    <recommendedName>
        <fullName evidence="1">Ribosomal RNA large subunit methyltransferase E</fullName>
        <ecNumber evidence="1">2.1.1.166</ecNumber>
    </recommendedName>
    <alternativeName>
        <fullName evidence="1">23S rRNA Um2552 methyltransferase</fullName>
    </alternativeName>
    <alternativeName>
        <fullName evidence="1">rRNA (uridine-2'-O-)-methyltransferase</fullName>
    </alternativeName>
</protein>
<reference key="1">
    <citation type="journal article" date="2008" name="Genomics">
        <title>Characterization of ST-4821 complex, a unique Neisseria meningitidis clone.</title>
        <authorList>
            <person name="Peng J."/>
            <person name="Yang L."/>
            <person name="Yang F."/>
            <person name="Yang J."/>
            <person name="Yan Y."/>
            <person name="Nie H."/>
            <person name="Zhang X."/>
            <person name="Xiong Z."/>
            <person name="Jiang Y."/>
            <person name="Cheng F."/>
            <person name="Xu X."/>
            <person name="Chen S."/>
            <person name="Sun L."/>
            <person name="Li W."/>
            <person name="Shen Y."/>
            <person name="Shao Z."/>
            <person name="Liang X."/>
            <person name="Xu J."/>
            <person name="Jin Q."/>
        </authorList>
    </citation>
    <scope>NUCLEOTIDE SEQUENCE [LARGE SCALE GENOMIC DNA]</scope>
    <source>
        <strain>053442</strain>
    </source>
</reference>
<accession>A9M3N1</accession>
<gene>
    <name evidence="1" type="primary">rlmE</name>
    <name evidence="1" type="synonym">ftsJ</name>
    <name evidence="1" type="synonym">rrmJ</name>
    <name type="ordered locus">NMCC_0763</name>
</gene>
<comment type="function">
    <text evidence="1">Specifically methylates the uridine in position 2552 of 23S rRNA at the 2'-O position of the ribose in the fully assembled 50S ribosomal subunit.</text>
</comment>
<comment type="catalytic activity">
    <reaction evidence="1">
        <text>uridine(2552) in 23S rRNA + S-adenosyl-L-methionine = 2'-O-methyluridine(2552) in 23S rRNA + S-adenosyl-L-homocysteine + H(+)</text>
        <dbReference type="Rhea" id="RHEA:42720"/>
        <dbReference type="Rhea" id="RHEA-COMP:10202"/>
        <dbReference type="Rhea" id="RHEA-COMP:10203"/>
        <dbReference type="ChEBI" id="CHEBI:15378"/>
        <dbReference type="ChEBI" id="CHEBI:57856"/>
        <dbReference type="ChEBI" id="CHEBI:59789"/>
        <dbReference type="ChEBI" id="CHEBI:65315"/>
        <dbReference type="ChEBI" id="CHEBI:74478"/>
        <dbReference type="EC" id="2.1.1.166"/>
    </reaction>
</comment>
<comment type="subcellular location">
    <subcellularLocation>
        <location evidence="1">Cytoplasm</location>
    </subcellularLocation>
</comment>
<comment type="similarity">
    <text evidence="1">Belongs to the class I-like SAM-binding methyltransferase superfamily. RNA methyltransferase RlmE family.</text>
</comment>
<proteinExistence type="inferred from homology"/>
<feature type="chain" id="PRO_1000087695" description="Ribosomal RNA large subunit methyltransferase E">
    <location>
        <begin position="1"/>
        <end position="206"/>
    </location>
</feature>
<feature type="active site" description="Proton acceptor" evidence="1">
    <location>
        <position position="162"/>
    </location>
</feature>
<feature type="binding site" evidence="1">
    <location>
        <position position="61"/>
    </location>
    <ligand>
        <name>S-adenosyl-L-methionine</name>
        <dbReference type="ChEBI" id="CHEBI:59789"/>
    </ligand>
</feature>
<feature type="binding site" evidence="1">
    <location>
        <position position="63"/>
    </location>
    <ligand>
        <name>S-adenosyl-L-methionine</name>
        <dbReference type="ChEBI" id="CHEBI:59789"/>
    </ligand>
</feature>
<feature type="binding site" evidence="1">
    <location>
        <position position="81"/>
    </location>
    <ligand>
        <name>S-adenosyl-L-methionine</name>
        <dbReference type="ChEBI" id="CHEBI:59789"/>
    </ligand>
</feature>
<feature type="binding site" evidence="1">
    <location>
        <position position="97"/>
    </location>
    <ligand>
        <name>S-adenosyl-L-methionine</name>
        <dbReference type="ChEBI" id="CHEBI:59789"/>
    </ligand>
</feature>
<feature type="binding site" evidence="1">
    <location>
        <position position="122"/>
    </location>
    <ligand>
        <name>S-adenosyl-L-methionine</name>
        <dbReference type="ChEBI" id="CHEBI:59789"/>
    </ligand>
</feature>
<keyword id="KW-0963">Cytoplasm</keyword>
<keyword id="KW-0489">Methyltransferase</keyword>
<keyword id="KW-0698">rRNA processing</keyword>
<keyword id="KW-0949">S-adenosyl-L-methionine</keyword>
<keyword id="KW-0808">Transferase</keyword>
<dbReference type="EC" id="2.1.1.166" evidence="1"/>
<dbReference type="EMBL" id="CP000381">
    <property type="protein sequence ID" value="ABX72956.1"/>
    <property type="molecule type" value="Genomic_DNA"/>
</dbReference>
<dbReference type="RefSeq" id="WP_002213963.1">
    <property type="nucleotide sequence ID" value="NC_010120.1"/>
</dbReference>
<dbReference type="SMR" id="A9M3N1"/>
<dbReference type="KEGG" id="nmn:NMCC_0763"/>
<dbReference type="HOGENOM" id="CLU_009422_4_0_4"/>
<dbReference type="Proteomes" id="UP000001177">
    <property type="component" value="Chromosome"/>
</dbReference>
<dbReference type="GO" id="GO:0005737">
    <property type="term" value="C:cytoplasm"/>
    <property type="evidence" value="ECO:0007669"/>
    <property type="project" value="UniProtKB-SubCell"/>
</dbReference>
<dbReference type="GO" id="GO:0008650">
    <property type="term" value="F:rRNA (uridine-2'-O-)-methyltransferase activity"/>
    <property type="evidence" value="ECO:0007669"/>
    <property type="project" value="UniProtKB-UniRule"/>
</dbReference>
<dbReference type="FunFam" id="3.40.50.150:FF:000005">
    <property type="entry name" value="Ribosomal RNA large subunit methyltransferase E"/>
    <property type="match status" value="1"/>
</dbReference>
<dbReference type="Gene3D" id="3.40.50.150">
    <property type="entry name" value="Vaccinia Virus protein VP39"/>
    <property type="match status" value="1"/>
</dbReference>
<dbReference type="HAMAP" id="MF_01547">
    <property type="entry name" value="RNA_methyltr_E"/>
    <property type="match status" value="1"/>
</dbReference>
<dbReference type="InterPro" id="IPR050082">
    <property type="entry name" value="RNA_methyltr_RlmE"/>
</dbReference>
<dbReference type="InterPro" id="IPR002877">
    <property type="entry name" value="RNA_MeTrfase_FtsJ_dom"/>
</dbReference>
<dbReference type="InterPro" id="IPR015507">
    <property type="entry name" value="rRNA-MeTfrase_E"/>
</dbReference>
<dbReference type="InterPro" id="IPR029063">
    <property type="entry name" value="SAM-dependent_MTases_sf"/>
</dbReference>
<dbReference type="PANTHER" id="PTHR10920">
    <property type="entry name" value="RIBOSOMAL RNA METHYLTRANSFERASE"/>
    <property type="match status" value="1"/>
</dbReference>
<dbReference type="PANTHER" id="PTHR10920:SF18">
    <property type="entry name" value="RRNA METHYLTRANSFERASE 2, MITOCHONDRIAL"/>
    <property type="match status" value="1"/>
</dbReference>
<dbReference type="Pfam" id="PF01728">
    <property type="entry name" value="FtsJ"/>
    <property type="match status" value="1"/>
</dbReference>
<dbReference type="PIRSF" id="PIRSF005461">
    <property type="entry name" value="23S_rRNA_mtase"/>
    <property type="match status" value="1"/>
</dbReference>
<dbReference type="SUPFAM" id="SSF53335">
    <property type="entry name" value="S-adenosyl-L-methionine-dependent methyltransferases"/>
    <property type="match status" value="1"/>
</dbReference>